<keyword id="KW-0256">Endoplasmic reticulum</keyword>
<keyword id="KW-0275">Fatty acid biosynthesis</keyword>
<keyword id="KW-0276">Fatty acid metabolism</keyword>
<keyword id="KW-0413">Isomerase</keyword>
<keyword id="KW-0444">Lipid biosynthesis</keyword>
<keyword id="KW-0443">Lipid metabolism</keyword>
<keyword id="KW-0449">Lipoprotein</keyword>
<keyword id="KW-0472">Membrane</keyword>
<keyword id="KW-0496">Mitochondrion</keyword>
<keyword id="KW-0519">Myristate</keyword>
<keyword id="KW-0560">Oxidoreductase</keyword>
<keyword id="KW-0597">Phosphoprotein</keyword>
<keyword id="KW-1185">Reference proteome</keyword>
<keyword id="KW-0812">Transmembrane</keyword>
<keyword id="KW-1133">Transmembrane helix</keyword>
<dbReference type="EC" id="1.14.19.17" evidence="2"/>
<dbReference type="EC" id="5.2.1.-" evidence="3"/>
<dbReference type="EMBL" id="CR857686">
    <property type="protein sequence ID" value="CAH89956.1"/>
    <property type="molecule type" value="mRNA"/>
</dbReference>
<dbReference type="RefSeq" id="NP_001124918.1">
    <property type="nucleotide sequence ID" value="NM_001131446.1"/>
</dbReference>
<dbReference type="FunCoup" id="Q5RE51">
    <property type="interactions" value="1920"/>
</dbReference>
<dbReference type="STRING" id="9601.ENSPPYP00000011912"/>
<dbReference type="GeneID" id="100171788"/>
<dbReference type="KEGG" id="pon:100171788"/>
<dbReference type="CTD" id="8560"/>
<dbReference type="eggNOG" id="KOG2987">
    <property type="taxonomic scope" value="Eukaryota"/>
</dbReference>
<dbReference type="InParanoid" id="Q5RE51"/>
<dbReference type="OrthoDB" id="200948at2759"/>
<dbReference type="Proteomes" id="UP000001595">
    <property type="component" value="Unplaced"/>
</dbReference>
<dbReference type="GO" id="GO:0005789">
    <property type="term" value="C:endoplasmic reticulum membrane"/>
    <property type="evidence" value="ECO:0007669"/>
    <property type="project" value="UniProtKB-SubCell"/>
</dbReference>
<dbReference type="GO" id="GO:0031966">
    <property type="term" value="C:mitochondrial membrane"/>
    <property type="evidence" value="ECO:0007669"/>
    <property type="project" value="UniProtKB-SubCell"/>
</dbReference>
<dbReference type="GO" id="GO:0016859">
    <property type="term" value="F:cis-trans isomerase activity"/>
    <property type="evidence" value="ECO:0000250"/>
    <property type="project" value="UniProtKB"/>
</dbReference>
<dbReference type="GO" id="GO:0050251">
    <property type="term" value="F:retinol isomerase activity"/>
    <property type="evidence" value="ECO:0000250"/>
    <property type="project" value="UniProtKB"/>
</dbReference>
<dbReference type="GO" id="GO:0042284">
    <property type="term" value="F:sphingolipid delta-4 desaturase activity"/>
    <property type="evidence" value="ECO:0007669"/>
    <property type="project" value="UniProtKB-EC"/>
</dbReference>
<dbReference type="GO" id="GO:0046513">
    <property type="term" value="P:ceramide biosynthetic process"/>
    <property type="evidence" value="ECO:0007669"/>
    <property type="project" value="TreeGrafter"/>
</dbReference>
<dbReference type="GO" id="GO:0006633">
    <property type="term" value="P:fatty acid biosynthetic process"/>
    <property type="evidence" value="ECO:0007669"/>
    <property type="project" value="UniProtKB-KW"/>
</dbReference>
<dbReference type="GO" id="GO:0043217">
    <property type="term" value="P:myelin maintenance"/>
    <property type="evidence" value="ECO:0000250"/>
    <property type="project" value="UniProtKB"/>
</dbReference>
<dbReference type="CDD" id="cd03508">
    <property type="entry name" value="Delta4-sphingolipid-FADS-like"/>
    <property type="match status" value="1"/>
</dbReference>
<dbReference type="InterPro" id="IPR011388">
    <property type="entry name" value="DES1/DES2"/>
</dbReference>
<dbReference type="InterPro" id="IPR005804">
    <property type="entry name" value="FA_desaturase_dom"/>
</dbReference>
<dbReference type="InterPro" id="IPR013866">
    <property type="entry name" value="Sphingolipid_d4-desaturase_N"/>
</dbReference>
<dbReference type="PANTHER" id="PTHR12879">
    <property type="entry name" value="SPHINGOLIPID DELTA 4 DESATURASE/C-4 HYDROXYLASE PROTEIN DES2"/>
    <property type="match status" value="1"/>
</dbReference>
<dbReference type="PANTHER" id="PTHR12879:SF2">
    <property type="entry name" value="SPHINGOLIPID DELTA(4)-DESATURASE DES1"/>
    <property type="match status" value="1"/>
</dbReference>
<dbReference type="Pfam" id="PF00487">
    <property type="entry name" value="FA_desaturase"/>
    <property type="match status" value="1"/>
</dbReference>
<dbReference type="Pfam" id="PF08557">
    <property type="entry name" value="Lipid_DES"/>
    <property type="match status" value="1"/>
</dbReference>
<dbReference type="PIRSF" id="PIRSF017228">
    <property type="entry name" value="Sphnglp_dlt4_des"/>
    <property type="match status" value="1"/>
</dbReference>
<dbReference type="SMART" id="SM01269">
    <property type="entry name" value="Lipid_DES"/>
    <property type="match status" value="1"/>
</dbReference>
<sequence>MGNRVSREDFEWVYTDQPHADRRREILAKYPEIKSLMKPDPNLIWIIIMMVLTQLAAFYIVKDLDWKWVIFGAYAFGSCINHSMTLGIHEIAHNAAFGNCKAMWNRWFGMFANLPIGIPYSVSFKSYHMDHHRYLGADGVDVDIPTDFEGWFFCTAFRKFIWVILQPLFYAFRPLFINPKPITYLEVINTVAQVTFDILIYYFLGIKSLVYMLAASLLGLGLHPISGHFIAEHYMFLKGHETYSYYGPLNLLTFNVGYHNEHHDFPNIPGKSLPLVRKIAAEYYDNLPHYNSWIKVLYDFVMDDTISPYSRMKRHQKGEMVLE</sequence>
<organism>
    <name type="scientific">Pongo abelii</name>
    <name type="common">Sumatran orangutan</name>
    <name type="synonym">Pongo pygmaeus abelii</name>
    <dbReference type="NCBI Taxonomy" id="9601"/>
    <lineage>
        <taxon>Eukaryota</taxon>
        <taxon>Metazoa</taxon>
        <taxon>Chordata</taxon>
        <taxon>Craniata</taxon>
        <taxon>Vertebrata</taxon>
        <taxon>Euteleostomi</taxon>
        <taxon>Mammalia</taxon>
        <taxon>Eutheria</taxon>
        <taxon>Euarchontoglires</taxon>
        <taxon>Primates</taxon>
        <taxon>Haplorrhini</taxon>
        <taxon>Catarrhini</taxon>
        <taxon>Hominidae</taxon>
        <taxon>Pongo</taxon>
    </lineage>
</organism>
<accession>Q5RE51</accession>
<proteinExistence type="evidence at transcript level"/>
<evidence type="ECO:0000250" key="1">
    <source>
        <dbReference type="UniProtKB" id="O09005"/>
    </source>
</evidence>
<evidence type="ECO:0000250" key="2">
    <source>
        <dbReference type="UniProtKB" id="O15121"/>
    </source>
</evidence>
<evidence type="ECO:0000250" key="3">
    <source>
        <dbReference type="UniProtKB" id="Q5F3C1"/>
    </source>
</evidence>
<evidence type="ECO:0000255" key="4"/>
<evidence type="ECO:0000305" key="5"/>
<name>DEGS1_PONAB</name>
<reference key="1">
    <citation type="submission" date="2004-11" db="EMBL/GenBank/DDBJ databases">
        <authorList>
            <consortium name="The German cDNA consortium"/>
        </authorList>
    </citation>
    <scope>NUCLEOTIDE SEQUENCE [LARGE SCALE MRNA]</scope>
    <source>
        <tissue>Heart</tissue>
    </source>
</reference>
<comment type="function">
    <text evidence="1 3">Has sphingolipid-delta-4-desaturase activity. Converts D-erythro-sphinganine to D-erythro-sphingosine (E-sphing-4-enine) (By similarity). Catalyzes the equilibrium isomerization of retinols (By similarity).</text>
</comment>
<comment type="catalytic activity">
    <reaction evidence="2">
        <text>an N-acylsphinganine + 2 Fe(II)-[cytochrome b5] + O2 + 2 H(+) = an N-acylsphing-4-enine + 2 Fe(III)-[cytochrome b5] + 2 H2O</text>
        <dbReference type="Rhea" id="RHEA:46544"/>
        <dbReference type="Rhea" id="RHEA-COMP:10438"/>
        <dbReference type="Rhea" id="RHEA-COMP:10439"/>
        <dbReference type="ChEBI" id="CHEBI:15377"/>
        <dbReference type="ChEBI" id="CHEBI:15378"/>
        <dbReference type="ChEBI" id="CHEBI:15379"/>
        <dbReference type="ChEBI" id="CHEBI:29033"/>
        <dbReference type="ChEBI" id="CHEBI:29034"/>
        <dbReference type="ChEBI" id="CHEBI:31488"/>
        <dbReference type="ChEBI" id="CHEBI:52639"/>
        <dbReference type="EC" id="1.14.19.17"/>
    </reaction>
    <physiologicalReaction direction="left-to-right" evidence="2">
        <dbReference type="Rhea" id="RHEA:46545"/>
    </physiologicalReaction>
</comment>
<comment type="catalytic activity">
    <reaction evidence="1">
        <text>all-trans-retinol = 11-cis-retinol</text>
        <dbReference type="Rhea" id="RHEA:19141"/>
        <dbReference type="ChEBI" id="CHEBI:16302"/>
        <dbReference type="ChEBI" id="CHEBI:17336"/>
    </reaction>
    <physiologicalReaction direction="left-to-right" evidence="1">
        <dbReference type="Rhea" id="RHEA:19142"/>
    </physiologicalReaction>
    <physiologicalReaction direction="right-to-left" evidence="1">
        <dbReference type="Rhea" id="RHEA:19143"/>
    </physiologicalReaction>
</comment>
<comment type="catalytic activity">
    <reaction evidence="3">
        <text>all-trans-retinol = 9-cis-retinol</text>
        <dbReference type="Rhea" id="RHEA:55348"/>
        <dbReference type="ChEBI" id="CHEBI:17336"/>
        <dbReference type="ChEBI" id="CHEBI:78272"/>
    </reaction>
    <physiologicalReaction direction="left-to-right" evidence="3">
        <dbReference type="Rhea" id="RHEA:55349"/>
    </physiologicalReaction>
</comment>
<comment type="catalytic activity">
    <reaction evidence="3">
        <text>all-trans-retinol = 13-cis-retinol</text>
        <dbReference type="Rhea" id="RHEA:55352"/>
        <dbReference type="ChEBI" id="CHEBI:17336"/>
        <dbReference type="ChEBI" id="CHEBI:45479"/>
    </reaction>
    <physiologicalReaction direction="left-to-right" evidence="3">
        <dbReference type="Rhea" id="RHEA:55353"/>
    </physiologicalReaction>
</comment>
<comment type="catalytic activity">
    <reaction evidence="3">
        <text>11-cis-retinol = 13-cis-retinol</text>
        <dbReference type="Rhea" id="RHEA:55356"/>
        <dbReference type="ChEBI" id="CHEBI:16302"/>
        <dbReference type="ChEBI" id="CHEBI:45479"/>
    </reaction>
    <physiologicalReaction direction="left-to-right" evidence="3">
        <dbReference type="Rhea" id="RHEA:55357"/>
    </physiologicalReaction>
</comment>
<comment type="catalytic activity">
    <reaction evidence="3">
        <text>11-cis-retinol = 9-cis-retinol</text>
        <dbReference type="Rhea" id="RHEA:55360"/>
        <dbReference type="ChEBI" id="CHEBI:16302"/>
        <dbReference type="ChEBI" id="CHEBI:78272"/>
    </reaction>
    <physiologicalReaction direction="left-to-right" evidence="3">
        <dbReference type="Rhea" id="RHEA:55361"/>
    </physiologicalReaction>
</comment>
<comment type="subunit">
    <text evidence="3">Interacts with RLBP1; the interaction increases synthesis of chromophore-precursors by DEGS1.</text>
</comment>
<comment type="subcellular location">
    <subcellularLocation>
        <location evidence="2">Mitochondrion membrane</location>
    </subcellularLocation>
    <subcellularLocation>
        <location evidence="2">Endoplasmic reticulum membrane</location>
        <topology evidence="2">Multi-pass membrane protein</topology>
    </subcellularLocation>
</comment>
<comment type="PTM">
    <text evidence="2">Myristoylation can target the enzyme to the mitochondria leading to an increase in ceramide levels.</text>
</comment>
<comment type="similarity">
    <text evidence="5">Belongs to the fatty acid desaturase type 1 family. DEGS subfamily.</text>
</comment>
<protein>
    <recommendedName>
        <fullName evidence="5">Sphingolipid delta(4)-desaturase DES1</fullName>
        <ecNumber evidence="2">1.14.19.17</ecNumber>
    </recommendedName>
    <alternativeName>
        <fullName>Degenerative spermatocyte homolog 1</fullName>
    </alternativeName>
    <alternativeName>
        <fullName>Dihydroceramide desaturase-1</fullName>
    </alternativeName>
    <alternativeName>
        <fullName>Retinol isomerase</fullName>
        <ecNumber evidence="3">5.2.1.-</ecNumber>
    </alternativeName>
</protein>
<feature type="initiator methionine" description="Removed" evidence="2">
    <location>
        <position position="1"/>
    </location>
</feature>
<feature type="chain" id="PRO_0000312730" description="Sphingolipid delta(4)-desaturase DES1">
    <location>
        <begin position="2"/>
        <end position="323"/>
    </location>
</feature>
<feature type="transmembrane region" description="Helical" evidence="4">
    <location>
        <begin position="41"/>
        <end position="61"/>
    </location>
</feature>
<feature type="transmembrane region" description="Helical" evidence="4">
    <location>
        <begin position="68"/>
        <end position="88"/>
    </location>
</feature>
<feature type="transmembrane region" description="Helical" evidence="4">
    <location>
        <begin position="107"/>
        <end position="127"/>
    </location>
</feature>
<feature type="transmembrane region" description="Helical" evidence="4">
    <location>
        <begin position="152"/>
        <end position="172"/>
    </location>
</feature>
<feature type="transmembrane region" description="Helical" evidence="4">
    <location>
        <begin position="184"/>
        <end position="204"/>
    </location>
</feature>
<feature type="transmembrane region" description="Helical" evidence="4">
    <location>
        <begin position="209"/>
        <end position="229"/>
    </location>
</feature>
<feature type="short sequence motif" description="Histidine box-1" evidence="5">
    <location>
        <begin position="89"/>
        <end position="93"/>
    </location>
</feature>
<feature type="short sequence motif" description="Histidine box-2" evidence="5">
    <location>
        <begin position="128"/>
        <end position="132"/>
    </location>
</feature>
<feature type="short sequence motif" description="Histidine box-3" evidence="5">
    <location>
        <begin position="259"/>
        <end position="263"/>
    </location>
</feature>
<feature type="modified residue" description="Phosphoserine" evidence="2">
    <location>
        <position position="307"/>
    </location>
</feature>
<feature type="lipid moiety-binding region" description="N-myristoyl glycine" evidence="2">
    <location>
        <position position="2"/>
    </location>
</feature>
<gene>
    <name type="primary">DEGS1</name>
    <name type="synonym">DES1</name>
</gene>